<comment type="function">
    <text evidence="1">Binds 16S rRNA, required for the assembly of 30S particles and may also be responsible for determining the conformation of the 16S rRNA at the A site.</text>
</comment>
<comment type="subunit">
    <text evidence="1">Part of the 30S ribosomal subunit. Contacts proteins S3 and S10.</text>
</comment>
<comment type="similarity">
    <text evidence="1">Belongs to the universal ribosomal protein uS14 family.</text>
</comment>
<name>RS14_FRATO</name>
<reference key="1">
    <citation type="journal article" date="2006" name="J. Bacteriol.">
        <title>Chromosome rearrangement and diversification of Francisella tularensis revealed by the type B (OSU18) genome sequence.</title>
        <authorList>
            <person name="Petrosino J.F."/>
            <person name="Xiang Q."/>
            <person name="Karpathy S.E."/>
            <person name="Jiang H."/>
            <person name="Yerrapragada S."/>
            <person name="Liu Y."/>
            <person name="Gioia J."/>
            <person name="Hemphill L."/>
            <person name="Gonzalez A."/>
            <person name="Raghavan T.M."/>
            <person name="Uzman A."/>
            <person name="Fox G.E."/>
            <person name="Highlander S."/>
            <person name="Reichard M."/>
            <person name="Morton R.J."/>
            <person name="Clinkenbeard K.D."/>
            <person name="Weinstock G.M."/>
        </authorList>
    </citation>
    <scope>NUCLEOTIDE SEQUENCE [LARGE SCALE GENOMIC DNA]</scope>
    <source>
        <strain>OSU18</strain>
    </source>
</reference>
<protein>
    <recommendedName>
        <fullName evidence="1">Small ribosomal subunit protein uS14</fullName>
    </recommendedName>
    <alternativeName>
        <fullName evidence="2">30S ribosomal protein S14</fullName>
    </alternativeName>
</protein>
<organism>
    <name type="scientific">Francisella tularensis subsp. holarctica (strain OSU18)</name>
    <dbReference type="NCBI Taxonomy" id="393011"/>
    <lineage>
        <taxon>Bacteria</taxon>
        <taxon>Pseudomonadati</taxon>
        <taxon>Pseudomonadota</taxon>
        <taxon>Gammaproteobacteria</taxon>
        <taxon>Thiotrichales</taxon>
        <taxon>Francisellaceae</taxon>
        <taxon>Francisella</taxon>
    </lineage>
</organism>
<feature type="chain" id="PRO_0000269048" description="Small ribosomal subunit protein uS14">
    <location>
        <begin position="1"/>
        <end position="101"/>
    </location>
</feature>
<gene>
    <name evidence="1" type="primary">rpsN</name>
    <name type="ordered locus">FTH_0244</name>
</gene>
<dbReference type="EMBL" id="CP000437">
    <property type="protein sequence ID" value="ABI82270.1"/>
    <property type="molecule type" value="Genomic_DNA"/>
</dbReference>
<dbReference type="RefSeq" id="WP_003014354.1">
    <property type="nucleotide sequence ID" value="NC_017463.1"/>
</dbReference>
<dbReference type="SMR" id="Q0BNR4"/>
<dbReference type="KEGG" id="fth:FTH_0244"/>
<dbReference type="GO" id="GO:0005737">
    <property type="term" value="C:cytoplasm"/>
    <property type="evidence" value="ECO:0007669"/>
    <property type="project" value="UniProtKB-ARBA"/>
</dbReference>
<dbReference type="GO" id="GO:0015935">
    <property type="term" value="C:small ribosomal subunit"/>
    <property type="evidence" value="ECO:0007669"/>
    <property type="project" value="TreeGrafter"/>
</dbReference>
<dbReference type="GO" id="GO:0019843">
    <property type="term" value="F:rRNA binding"/>
    <property type="evidence" value="ECO:0007669"/>
    <property type="project" value="UniProtKB-UniRule"/>
</dbReference>
<dbReference type="GO" id="GO:0003735">
    <property type="term" value="F:structural constituent of ribosome"/>
    <property type="evidence" value="ECO:0007669"/>
    <property type="project" value="InterPro"/>
</dbReference>
<dbReference type="GO" id="GO:0006412">
    <property type="term" value="P:translation"/>
    <property type="evidence" value="ECO:0007669"/>
    <property type="project" value="UniProtKB-UniRule"/>
</dbReference>
<dbReference type="FunFam" id="1.10.287.1480:FF:000001">
    <property type="entry name" value="30S ribosomal protein S14"/>
    <property type="match status" value="1"/>
</dbReference>
<dbReference type="Gene3D" id="1.10.287.1480">
    <property type="match status" value="1"/>
</dbReference>
<dbReference type="HAMAP" id="MF_00537">
    <property type="entry name" value="Ribosomal_uS14_1"/>
    <property type="match status" value="1"/>
</dbReference>
<dbReference type="InterPro" id="IPR001209">
    <property type="entry name" value="Ribosomal_uS14"/>
</dbReference>
<dbReference type="InterPro" id="IPR023036">
    <property type="entry name" value="Ribosomal_uS14_bac/plastid"/>
</dbReference>
<dbReference type="InterPro" id="IPR018271">
    <property type="entry name" value="Ribosomal_uS14_CS"/>
</dbReference>
<dbReference type="NCBIfam" id="NF006477">
    <property type="entry name" value="PRK08881.1"/>
    <property type="match status" value="1"/>
</dbReference>
<dbReference type="PANTHER" id="PTHR19836">
    <property type="entry name" value="30S RIBOSOMAL PROTEIN S14"/>
    <property type="match status" value="1"/>
</dbReference>
<dbReference type="PANTHER" id="PTHR19836:SF19">
    <property type="entry name" value="SMALL RIBOSOMAL SUBUNIT PROTEIN US14M"/>
    <property type="match status" value="1"/>
</dbReference>
<dbReference type="Pfam" id="PF00253">
    <property type="entry name" value="Ribosomal_S14"/>
    <property type="match status" value="1"/>
</dbReference>
<dbReference type="SUPFAM" id="SSF57716">
    <property type="entry name" value="Glucocorticoid receptor-like (DNA-binding domain)"/>
    <property type="match status" value="1"/>
</dbReference>
<dbReference type="PROSITE" id="PS00527">
    <property type="entry name" value="RIBOSOMAL_S14"/>
    <property type="match status" value="1"/>
</dbReference>
<proteinExistence type="inferred from homology"/>
<accession>Q0BNR4</accession>
<evidence type="ECO:0000255" key="1">
    <source>
        <dbReference type="HAMAP-Rule" id="MF_00537"/>
    </source>
</evidence>
<evidence type="ECO:0000305" key="2"/>
<sequence length="101" mass="11718">MAKKSMIQRELKREKLVAKYAQKRAEFKAIILDINSTEEQIWEAQIKLQKLPVNSSASRVQRRCKVTGRPHAVYRKFGLCRNKLREYAMAGDVPGLKKASW</sequence>
<keyword id="KW-0687">Ribonucleoprotein</keyword>
<keyword id="KW-0689">Ribosomal protein</keyword>
<keyword id="KW-0694">RNA-binding</keyword>
<keyword id="KW-0699">rRNA-binding</keyword>